<gene>
    <name type="ordered locus">UU046</name>
</gene>
<accession>Q9PR99</accession>
<protein>
    <recommendedName>
        <fullName>Uncharacterized protein UU046</fullName>
    </recommendedName>
</protein>
<feature type="chain" id="PRO_0000220789" description="Uncharacterized protein UU046">
    <location>
        <begin position="1"/>
        <end position="791"/>
    </location>
</feature>
<feature type="transmembrane region" description="Helical" evidence="1">
    <location>
        <begin position="10"/>
        <end position="30"/>
    </location>
</feature>
<feature type="region of interest" description="Disordered" evidence="2">
    <location>
        <begin position="56"/>
        <end position="175"/>
    </location>
</feature>
<feature type="compositionally biased region" description="Basic and acidic residues" evidence="2">
    <location>
        <begin position="56"/>
        <end position="76"/>
    </location>
</feature>
<feature type="compositionally biased region" description="Pro residues" evidence="2">
    <location>
        <begin position="77"/>
        <end position="97"/>
    </location>
</feature>
<feature type="compositionally biased region" description="Basic and acidic residues" evidence="2">
    <location>
        <begin position="98"/>
        <end position="124"/>
    </location>
</feature>
<feature type="compositionally biased region" description="Pro residues" evidence="2">
    <location>
        <begin position="125"/>
        <end position="139"/>
    </location>
</feature>
<name>Y046_UREPA</name>
<evidence type="ECO:0000255" key="1"/>
<evidence type="ECO:0000256" key="2">
    <source>
        <dbReference type="SAM" id="MobiDB-lite"/>
    </source>
</evidence>
<evidence type="ECO:0000305" key="3"/>
<sequence>MKFIKRKTKLLTITIGAVAVSSILLGGIFYGTSQKSPSSFGIASIDQKENFINKDNLDYQKARPSIKDNNLKEIPKPKPQPKPEPQPTPFPDPIPTPPKKEELKKPEIKPEEPKKPEIKPEPIPKPKPQPIPQPTPPVETKPKEELLPPSPPPPKEEPKPEPDPQPQPQQIPNQSTVRKIELNGVLVDAEVEVPPPRQTFKYDQDNGLSNLNPYTNISVGKIKKVFVTDELRHKSADLVRGNLKRGDYQSLVKDLLDPNIKPEEIDSYIAMVDKSGYHAKLWSKFKKLFDTDNVVNFLNEQGKKEYPNMKTKFVSDAHKYAWLYAHLDFSKFTKLSANSEKYLQEGLTPDPDNSYVNENGELDSYAYSPAKEYNTVTSRLANDNANRRVFGYNEWYNRSPNGLANGDYPGWNKSDATAEFKQYGIKDGDGIKVYKLERQKPQEGKLNTGYIVDIDADNPDGYQKTKELIQKLNNQNKKITGYRIRNMGKSDSGQKFSDILKALPNELPLLELFFSAGSHNTSALSALETKHIKELGLYTLGNSLLDEWSINPNALRKVEWINSNDYNVSSEYKQGSDIATRITFDTLSFDKNDFNDNANDLRTKLKRINDGLRMVYWTRNNEPFFQGGFGPGLDPDHKEVGNSYPQGLDFSRVPQIRSLRGLIFKDEQKASNNRERKLRRVNFFNDKENYEMSINDLNEAGFSEHIVTNEPMPPKSKITFSNGNATKRIYIKGNGSLTASGIQNLATLFNLAESLDSKSVVVDSNNSELKSQLEGLGYKVSDASDANYIDI</sequence>
<keyword id="KW-0472">Membrane</keyword>
<keyword id="KW-1185">Reference proteome</keyword>
<keyword id="KW-0812">Transmembrane</keyword>
<keyword id="KW-1133">Transmembrane helix</keyword>
<dbReference type="EMBL" id="AF222894">
    <property type="protein sequence ID" value="AAF30451.1"/>
    <property type="molecule type" value="Genomic_DNA"/>
</dbReference>
<dbReference type="RefSeq" id="WP_006688654.1">
    <property type="nucleotide sequence ID" value="NC_002162.1"/>
</dbReference>
<dbReference type="SMR" id="Q9PR99"/>
<dbReference type="STRING" id="273119.UU046"/>
<dbReference type="EnsemblBacteria" id="AAF30451">
    <property type="protein sequence ID" value="AAF30451"/>
    <property type="gene ID" value="UU046"/>
</dbReference>
<dbReference type="GeneID" id="29672316"/>
<dbReference type="KEGG" id="uur:UU046"/>
<dbReference type="eggNOG" id="COG0810">
    <property type="taxonomic scope" value="Bacteria"/>
</dbReference>
<dbReference type="HOGENOM" id="CLU_020577_0_0_14"/>
<dbReference type="OrthoDB" id="401311at2"/>
<dbReference type="Proteomes" id="UP000000423">
    <property type="component" value="Chromosome"/>
</dbReference>
<dbReference type="GO" id="GO:0016020">
    <property type="term" value="C:membrane"/>
    <property type="evidence" value="ECO:0007669"/>
    <property type="project" value="UniProtKB-SubCell"/>
</dbReference>
<dbReference type="InterPro" id="IPR030942">
    <property type="entry name" value="Mycoplas_M_dom"/>
</dbReference>
<dbReference type="InterPro" id="IPR030941">
    <property type="entry name" value="Predic_Ig_block"/>
</dbReference>
<dbReference type="NCBIfam" id="TIGR04524">
    <property type="entry name" value="mycoplas_M_dom"/>
    <property type="match status" value="1"/>
</dbReference>
<dbReference type="NCBIfam" id="TIGR04526">
    <property type="entry name" value="predic_Ig_block"/>
    <property type="match status" value="1"/>
</dbReference>
<proteinExistence type="predicted"/>
<reference key="1">
    <citation type="journal article" date="2000" name="Nature">
        <title>The complete sequence of the mucosal pathogen Ureaplasma urealyticum.</title>
        <authorList>
            <person name="Glass J.I."/>
            <person name="Lefkowitz E.J."/>
            <person name="Glass J.S."/>
            <person name="Heiner C.R."/>
            <person name="Chen E.Y."/>
            <person name="Cassell G.H."/>
        </authorList>
    </citation>
    <scope>NUCLEOTIDE SEQUENCE [LARGE SCALE GENOMIC DNA]</scope>
    <source>
        <strain>ATCC 700970</strain>
    </source>
</reference>
<organism>
    <name type="scientific">Ureaplasma parvum serovar 3 (strain ATCC 700970)</name>
    <dbReference type="NCBI Taxonomy" id="273119"/>
    <lineage>
        <taxon>Bacteria</taxon>
        <taxon>Bacillati</taxon>
        <taxon>Mycoplasmatota</taxon>
        <taxon>Mycoplasmoidales</taxon>
        <taxon>Mycoplasmoidaceae</taxon>
        <taxon>Ureaplasma</taxon>
    </lineage>
</organism>
<comment type="subcellular location">
    <subcellularLocation>
        <location evidence="3">Membrane</location>
        <topology evidence="3">Single-pass membrane protein</topology>
    </subcellularLocation>
</comment>
<comment type="similarity">
    <text evidence="3">To U.parvum UU044.</text>
</comment>